<comment type="function">
    <text evidence="3 4 5 6 7 8 9">Methyltransferase; part of the gene cluster that mediates the biosynthesis of geodin, an intermediate in the biosynthesis of other natural products (PubMed:19549600, PubMed:24009710, PubMed:7665560). The pathway begins with the synthesis of atrochrysone thioester by the polyketide synthase (PKS) gedC (PubMed:12536215, PubMed:19549600). The atrochrysone carboxyl ACP thioesterase gedB then breaks the thioester bond and releases the atrochrysone carboxylic acid from gedC (PubMed:19549600). The atrochrysone carboxylic acid is then converted to atrochrysone which is further transformed into emodinanthrone (PubMed:24009710). The next step is performed by the emodinanthrone oxygenase gedH that catalyzes the oxidation of emodinanthrone to emodin (PubMed:1810248). Emodin O-methyltransferase encoded probably by gedA then catalyzes methylation of the 8-hydroxy group of emodin to form questin (PubMed:1444712). Ring cleavage of questin by questin oxidase gedK leads to desmethylsulochrin via several intermediates including questin epoxide (PubMed:3182756). Another methylation step probably catalyzed by methyltransferase gedG leads to the formation of sulochrin which is further converted to dihydrogeodin by the sulochrin halogenase gedL (PubMed:24009710). Finally, the dihydrogeodin oxidase gedJ catalyzes the stereospecific phenol oxidative coupling reaction converting dihydrogeodin to geodin (PubMed:7665560).</text>
</comment>
<comment type="pathway">
    <text evidence="7">Secondary metabolite biosynthesis.</text>
</comment>
<comment type="similarity">
    <text evidence="11">Belongs to the methyltransferase superfamily.</text>
</comment>
<accession>Q0CCX8</accession>
<evidence type="ECO:0000255" key="1"/>
<evidence type="ECO:0000256" key="2">
    <source>
        <dbReference type="SAM" id="MobiDB-lite"/>
    </source>
</evidence>
<evidence type="ECO:0000269" key="3">
    <source>
    </source>
</evidence>
<evidence type="ECO:0000269" key="4">
    <source>
    </source>
</evidence>
<evidence type="ECO:0000269" key="5">
    <source>
    </source>
</evidence>
<evidence type="ECO:0000269" key="6">
    <source>
    </source>
</evidence>
<evidence type="ECO:0000269" key="7">
    <source>
    </source>
</evidence>
<evidence type="ECO:0000269" key="8">
    <source>
    </source>
</evidence>
<evidence type="ECO:0000269" key="9">
    <source>
    </source>
</evidence>
<evidence type="ECO:0000303" key="10">
    <source>
    </source>
</evidence>
<evidence type="ECO:0000305" key="11"/>
<evidence type="ECO:0000305" key="12">
    <source>
    </source>
</evidence>
<dbReference type="EC" id="2.1.1.-" evidence="12"/>
<dbReference type="EMBL" id="CH476605">
    <property type="protein sequence ID" value="EAU31629.1"/>
    <property type="molecule type" value="Genomic_DNA"/>
</dbReference>
<dbReference type="RefSeq" id="XP_001217595.1">
    <property type="nucleotide sequence ID" value="XM_001217594.1"/>
</dbReference>
<dbReference type="SMR" id="Q0CCX8"/>
<dbReference type="STRING" id="341663.Q0CCX8"/>
<dbReference type="EnsemblFungi" id="EAU31629">
    <property type="protein sequence ID" value="EAU31629"/>
    <property type="gene ID" value="ATEG_08456"/>
</dbReference>
<dbReference type="GeneID" id="4353106"/>
<dbReference type="VEuPathDB" id="FungiDB:ATEG_08456"/>
<dbReference type="eggNOG" id="ENOG502SJ7Q">
    <property type="taxonomic scope" value="Eukaryota"/>
</dbReference>
<dbReference type="HOGENOM" id="CLU_049344_0_1_1"/>
<dbReference type="OMA" id="MQAIATQ"/>
<dbReference type="OrthoDB" id="10027013at2759"/>
<dbReference type="Proteomes" id="UP000007963">
    <property type="component" value="Unassembled WGS sequence"/>
</dbReference>
<dbReference type="GO" id="GO:0008757">
    <property type="term" value="F:S-adenosylmethionine-dependent methyltransferase activity"/>
    <property type="evidence" value="ECO:0007669"/>
    <property type="project" value="InterPro"/>
</dbReference>
<dbReference type="GO" id="GO:0032259">
    <property type="term" value="P:methylation"/>
    <property type="evidence" value="ECO:0007669"/>
    <property type="project" value="UniProtKB-KW"/>
</dbReference>
<dbReference type="CDD" id="cd02440">
    <property type="entry name" value="AdoMet_MTases"/>
    <property type="match status" value="1"/>
</dbReference>
<dbReference type="Gene3D" id="3.40.50.150">
    <property type="entry name" value="Vaccinia Virus protein VP39"/>
    <property type="match status" value="1"/>
</dbReference>
<dbReference type="InterPro" id="IPR051052">
    <property type="entry name" value="Diverse_substrate_MTase"/>
</dbReference>
<dbReference type="InterPro" id="IPR013216">
    <property type="entry name" value="Methyltransf_11"/>
</dbReference>
<dbReference type="InterPro" id="IPR029063">
    <property type="entry name" value="SAM-dependent_MTases_sf"/>
</dbReference>
<dbReference type="PANTHER" id="PTHR44942">
    <property type="entry name" value="METHYLTRANSF_11 DOMAIN-CONTAINING PROTEIN"/>
    <property type="match status" value="1"/>
</dbReference>
<dbReference type="PANTHER" id="PTHR44942:SF4">
    <property type="entry name" value="METHYLTRANSFERASE TYPE 11 DOMAIN-CONTAINING PROTEIN"/>
    <property type="match status" value="1"/>
</dbReference>
<dbReference type="Pfam" id="PF08241">
    <property type="entry name" value="Methyltransf_11"/>
    <property type="match status" value="1"/>
</dbReference>
<dbReference type="SUPFAM" id="SSF53335">
    <property type="entry name" value="S-adenosyl-L-methionine-dependent methyltransferases"/>
    <property type="match status" value="1"/>
</dbReference>
<organism>
    <name type="scientific">Aspergillus terreus (strain NIH 2624 / FGSC A1156)</name>
    <dbReference type="NCBI Taxonomy" id="341663"/>
    <lineage>
        <taxon>Eukaryota</taxon>
        <taxon>Fungi</taxon>
        <taxon>Dikarya</taxon>
        <taxon>Ascomycota</taxon>
        <taxon>Pezizomycotina</taxon>
        <taxon>Eurotiomycetes</taxon>
        <taxon>Eurotiomycetidae</taxon>
        <taxon>Eurotiales</taxon>
        <taxon>Aspergillaceae</taxon>
        <taxon>Aspergillus</taxon>
        <taxon>Aspergillus subgen. Circumdati</taxon>
    </lineage>
</organism>
<keyword id="KW-0489">Methyltransferase</keyword>
<keyword id="KW-1185">Reference proteome</keyword>
<keyword id="KW-0949">S-adenosyl-L-methionine</keyword>
<keyword id="KW-0808">Transferase</keyword>
<feature type="chain" id="PRO_0000437070" description="Methyltransferase gedG">
    <location>
        <begin position="1"/>
        <end position="320"/>
    </location>
</feature>
<feature type="region of interest" description="Methyltransferase domain" evidence="1">
    <location>
        <begin position="61"/>
        <end position="154"/>
    </location>
</feature>
<feature type="region of interest" description="Disordered" evidence="2">
    <location>
        <begin position="231"/>
        <end position="252"/>
    </location>
</feature>
<feature type="compositionally biased region" description="Basic and acidic residues" evidence="2">
    <location>
        <begin position="235"/>
        <end position="252"/>
    </location>
</feature>
<sequence>MSVDTANPTSPMMETHEQIFAQDPDFWKNYRRGRPQVPYSFFQRIYNYHQGHSGRFETVHDAGAGNGVYSKELRSKFHHVIVSDVVAENVRQAEERLGTEGYSFRVGKMEELDEIPAASVDMVFVMNAMHWADDQTRAMRAIAAQLRPGGTFACAGFGPARFRDARVQDVWERISQQGGRLLLQTANQPVDTINVMVRSQDHYNVAPLDERLFRQRALRIYLNQETGGLTGLLPPERRGEVTEPDHEGPHDQITFEHDDEWRFDMDLDGFKEHFRTFPHAFRDPEAFTSLWQEIEELVRQGSRLDGAWPVTLILATRTNA</sequence>
<proteinExistence type="inferred from homology"/>
<gene>
    <name evidence="10" type="primary">gedG</name>
    <name type="ORF">ATEG_08456</name>
</gene>
<protein>
    <recommendedName>
        <fullName evidence="10">Methyltransferase gedG</fullName>
        <ecNumber evidence="12">2.1.1.-</ecNumber>
    </recommendedName>
    <alternativeName>
        <fullName evidence="10">Geodin synthesis protein G</fullName>
    </alternativeName>
</protein>
<name>GEDG_ASPTN</name>
<reference key="1">
    <citation type="submission" date="2005-09" db="EMBL/GenBank/DDBJ databases">
        <title>Annotation of the Aspergillus terreus NIH2624 genome.</title>
        <authorList>
            <person name="Birren B.W."/>
            <person name="Lander E.S."/>
            <person name="Galagan J.E."/>
            <person name="Nusbaum C."/>
            <person name="Devon K."/>
            <person name="Henn M."/>
            <person name="Ma L.-J."/>
            <person name="Jaffe D.B."/>
            <person name="Butler J."/>
            <person name="Alvarez P."/>
            <person name="Gnerre S."/>
            <person name="Grabherr M."/>
            <person name="Kleber M."/>
            <person name="Mauceli E.W."/>
            <person name="Brockman W."/>
            <person name="Rounsley S."/>
            <person name="Young S.K."/>
            <person name="LaButti K."/>
            <person name="Pushparaj V."/>
            <person name="DeCaprio D."/>
            <person name="Crawford M."/>
            <person name="Koehrsen M."/>
            <person name="Engels R."/>
            <person name="Montgomery P."/>
            <person name="Pearson M."/>
            <person name="Howarth C."/>
            <person name="Larson L."/>
            <person name="Luoma S."/>
            <person name="White J."/>
            <person name="Alvarado L."/>
            <person name="Kodira C.D."/>
            <person name="Zeng Q."/>
            <person name="Oleary S."/>
            <person name="Yandava C."/>
            <person name="Denning D.W."/>
            <person name="Nierman W.C."/>
            <person name="Milne T."/>
            <person name="Madden K."/>
        </authorList>
    </citation>
    <scope>NUCLEOTIDE SEQUENCE [LARGE SCALE GENOMIC DNA]</scope>
    <source>
        <strain>NIH 2624 / FGSC A1156</strain>
    </source>
</reference>
<reference key="2">
    <citation type="journal article" date="1988" name="J. Biochem.">
        <title>A novel anthraquinone ring cleavage enzyme from Aspergillus terreus.</title>
        <authorList>
            <person name="Fujii I."/>
            <person name="Ebizuka Y."/>
            <person name="Sankawa U."/>
        </authorList>
    </citation>
    <scope>FUNCTION</scope>
</reference>
<reference key="3">
    <citation type="journal article" date="1991" name="Biochem. Int.">
        <title>Identification of emodinanthrone oxygenase in fungus Aspergillus terreus.</title>
        <authorList>
            <person name="Fujii I."/>
            <person name="Chen Z.G."/>
            <person name="Ebizuka Y."/>
            <person name="Sankawa U."/>
        </authorList>
    </citation>
    <scope>FUNCTION</scope>
</reference>
<reference key="4">
    <citation type="journal article" date="1992" name="Arch. Microbiol.">
        <title>Emodin O-methyltransferase from Aspergillus terreus.</title>
        <authorList>
            <person name="Chen Z.G."/>
            <person name="Fujii I."/>
            <person name="Ebizuka Y."/>
            <person name="Sankawa U."/>
        </authorList>
    </citation>
    <scope>FUNCTION</scope>
</reference>
<reference key="5">
    <citation type="journal article" date="1995" name="J. Biol. Chem.">
        <title>Molecular cloning and heterologous expression of the gene encoding dihydrogeodin oxidase, a multicopper blue enzyme from Aspergillus terreus.</title>
        <authorList>
            <person name="Huang K.X."/>
            <person name="Fujii I."/>
            <person name="Ebizuka Y."/>
            <person name="Gomi K."/>
            <person name="Sankawa U."/>
        </authorList>
    </citation>
    <scope>FUNCTION</scope>
</reference>
<reference key="6">
    <citation type="journal article" date="2003" name="Nat. Biotechnol.">
        <title>Integrating transcriptional and metabolite profiles to direct the engineering of lovastatin-producing fungal strains.</title>
        <authorList>
            <person name="Askenazi M."/>
            <person name="Driggers E.M."/>
            <person name="Holtzman D.A."/>
            <person name="Norman T.C."/>
            <person name="Iverson S."/>
            <person name="Zimmer D.P."/>
            <person name="Boers M.E."/>
            <person name="Blomquist P.R."/>
            <person name="Martinez E.J."/>
            <person name="Monreal A.W."/>
            <person name="Feibelman T.P."/>
            <person name="Mayorga M.E."/>
            <person name="Maxon M.E."/>
            <person name="Sykes K."/>
            <person name="Tobin J.V."/>
            <person name="Cordero E."/>
            <person name="Salama S.R."/>
            <person name="Trueheart J."/>
            <person name="Royer J.C."/>
            <person name="Madden K.T."/>
        </authorList>
    </citation>
    <scope>FUNCTION</scope>
</reference>
<reference key="7">
    <citation type="journal article" date="2009" name="Chem. Biol.">
        <title>Physically discrete beta-lactamase-type thioesterase catalyzes product release in atrochrysone synthesis by iterative type I polyketide synthase.</title>
        <authorList>
            <person name="Awakawa T."/>
            <person name="Yokota K."/>
            <person name="Funa N."/>
            <person name="Doi F."/>
            <person name="Mori N."/>
            <person name="Watanabe H."/>
            <person name="Horinouchi S."/>
        </authorList>
    </citation>
    <scope>FUNCTION</scope>
</reference>
<reference key="8">
    <citation type="journal article" date="2013" name="PLoS ONE">
        <title>Heterologous reconstitution of the intact geodin gene cluster in Aspergillus nidulans through a simple and versatile PCR based approach.</title>
        <authorList>
            <person name="Nielsen M.T."/>
            <person name="Nielsen J.B."/>
            <person name="Anyaogu D.C."/>
            <person name="Holm D.K."/>
            <person name="Nielsen K.F."/>
            <person name="Larsen T.O."/>
            <person name="Mortensen U.H."/>
        </authorList>
    </citation>
    <scope>FUNCTION</scope>
</reference>